<dbReference type="EC" id="2.4.1.227" evidence="1"/>
<dbReference type="EMBL" id="CP000419">
    <property type="protein sequence ID" value="ABJ66025.1"/>
    <property type="molecule type" value="Genomic_DNA"/>
</dbReference>
<dbReference type="RefSeq" id="WP_011681002.1">
    <property type="nucleotide sequence ID" value="NC_008532.1"/>
</dbReference>
<dbReference type="SMR" id="Q03L97"/>
<dbReference type="CAZy" id="GT28">
    <property type="family name" value="Glycosyltransferase Family 28"/>
</dbReference>
<dbReference type="KEGG" id="ste:STER_0774"/>
<dbReference type="HOGENOM" id="CLU_037404_0_0_9"/>
<dbReference type="UniPathway" id="UPA00219"/>
<dbReference type="GO" id="GO:0005886">
    <property type="term" value="C:plasma membrane"/>
    <property type="evidence" value="ECO:0007669"/>
    <property type="project" value="UniProtKB-SubCell"/>
</dbReference>
<dbReference type="GO" id="GO:0050511">
    <property type="term" value="F:undecaprenyldiphospho-muramoylpentapeptide beta-N-acetylglucosaminyltransferase activity"/>
    <property type="evidence" value="ECO:0007669"/>
    <property type="project" value="UniProtKB-UniRule"/>
</dbReference>
<dbReference type="GO" id="GO:0005975">
    <property type="term" value="P:carbohydrate metabolic process"/>
    <property type="evidence" value="ECO:0007669"/>
    <property type="project" value="InterPro"/>
</dbReference>
<dbReference type="GO" id="GO:0051301">
    <property type="term" value="P:cell division"/>
    <property type="evidence" value="ECO:0007669"/>
    <property type="project" value="UniProtKB-KW"/>
</dbReference>
<dbReference type="GO" id="GO:0071555">
    <property type="term" value="P:cell wall organization"/>
    <property type="evidence" value="ECO:0007669"/>
    <property type="project" value="UniProtKB-KW"/>
</dbReference>
<dbReference type="GO" id="GO:0030259">
    <property type="term" value="P:lipid glycosylation"/>
    <property type="evidence" value="ECO:0007669"/>
    <property type="project" value="UniProtKB-UniRule"/>
</dbReference>
<dbReference type="GO" id="GO:0009252">
    <property type="term" value="P:peptidoglycan biosynthetic process"/>
    <property type="evidence" value="ECO:0007669"/>
    <property type="project" value="UniProtKB-UniRule"/>
</dbReference>
<dbReference type="GO" id="GO:0008360">
    <property type="term" value="P:regulation of cell shape"/>
    <property type="evidence" value="ECO:0007669"/>
    <property type="project" value="UniProtKB-KW"/>
</dbReference>
<dbReference type="CDD" id="cd03785">
    <property type="entry name" value="GT28_MurG"/>
    <property type="match status" value="1"/>
</dbReference>
<dbReference type="Gene3D" id="3.40.50.2000">
    <property type="entry name" value="Glycogen Phosphorylase B"/>
    <property type="match status" value="2"/>
</dbReference>
<dbReference type="HAMAP" id="MF_00033">
    <property type="entry name" value="MurG"/>
    <property type="match status" value="1"/>
</dbReference>
<dbReference type="InterPro" id="IPR006009">
    <property type="entry name" value="GlcNAc_MurG"/>
</dbReference>
<dbReference type="InterPro" id="IPR007235">
    <property type="entry name" value="Glyco_trans_28_C"/>
</dbReference>
<dbReference type="InterPro" id="IPR004276">
    <property type="entry name" value="GlycoTrans_28_N"/>
</dbReference>
<dbReference type="PANTHER" id="PTHR21015:SF27">
    <property type="entry name" value="UDP-N-ACETYLGLUCOSAMINE--N-ACETYLMURAMYL-(PENTAPEPTIDE) PYROPHOSPHORYL-UNDECAPRENOL N-ACETYLGLUCOSAMINE TRANSFERASE"/>
    <property type="match status" value="1"/>
</dbReference>
<dbReference type="PANTHER" id="PTHR21015">
    <property type="entry name" value="UDP-N-ACETYLGLUCOSAMINE--N-ACETYLMURAMYL-(PENTAPEPTIDE) PYROPHOSPHORYL-UNDECAPRENOL N-ACETYLGLUCOSAMINE TRANSFERASE 1"/>
    <property type="match status" value="1"/>
</dbReference>
<dbReference type="Pfam" id="PF04101">
    <property type="entry name" value="Glyco_tran_28_C"/>
    <property type="match status" value="1"/>
</dbReference>
<dbReference type="Pfam" id="PF03033">
    <property type="entry name" value="Glyco_transf_28"/>
    <property type="match status" value="1"/>
</dbReference>
<dbReference type="SUPFAM" id="SSF53756">
    <property type="entry name" value="UDP-Glycosyltransferase/glycogen phosphorylase"/>
    <property type="match status" value="1"/>
</dbReference>
<keyword id="KW-0131">Cell cycle</keyword>
<keyword id="KW-0132">Cell division</keyword>
<keyword id="KW-1003">Cell membrane</keyword>
<keyword id="KW-0133">Cell shape</keyword>
<keyword id="KW-0961">Cell wall biogenesis/degradation</keyword>
<keyword id="KW-0328">Glycosyltransferase</keyword>
<keyword id="KW-0472">Membrane</keyword>
<keyword id="KW-0573">Peptidoglycan synthesis</keyword>
<keyword id="KW-0808">Transferase</keyword>
<reference key="1">
    <citation type="journal article" date="2006" name="Proc. Natl. Acad. Sci. U.S.A.">
        <title>Comparative genomics of the lactic acid bacteria.</title>
        <authorList>
            <person name="Makarova K.S."/>
            <person name="Slesarev A."/>
            <person name="Wolf Y.I."/>
            <person name="Sorokin A."/>
            <person name="Mirkin B."/>
            <person name="Koonin E.V."/>
            <person name="Pavlov A."/>
            <person name="Pavlova N."/>
            <person name="Karamychev V."/>
            <person name="Polouchine N."/>
            <person name="Shakhova V."/>
            <person name="Grigoriev I."/>
            <person name="Lou Y."/>
            <person name="Rohksar D."/>
            <person name="Lucas S."/>
            <person name="Huang K."/>
            <person name="Goodstein D.M."/>
            <person name="Hawkins T."/>
            <person name="Plengvidhya V."/>
            <person name="Welker D."/>
            <person name="Hughes J."/>
            <person name="Goh Y."/>
            <person name="Benson A."/>
            <person name="Baldwin K."/>
            <person name="Lee J.-H."/>
            <person name="Diaz-Muniz I."/>
            <person name="Dosti B."/>
            <person name="Smeianov V."/>
            <person name="Wechter W."/>
            <person name="Barabote R."/>
            <person name="Lorca G."/>
            <person name="Altermann E."/>
            <person name="Barrangou R."/>
            <person name="Ganesan B."/>
            <person name="Xie Y."/>
            <person name="Rawsthorne H."/>
            <person name="Tamir D."/>
            <person name="Parker C."/>
            <person name="Breidt F."/>
            <person name="Broadbent J.R."/>
            <person name="Hutkins R."/>
            <person name="O'Sullivan D."/>
            <person name="Steele J."/>
            <person name="Unlu G."/>
            <person name="Saier M.H. Jr."/>
            <person name="Klaenhammer T."/>
            <person name="Richardson P."/>
            <person name="Kozyavkin S."/>
            <person name="Weimer B.C."/>
            <person name="Mills D.A."/>
        </authorList>
    </citation>
    <scope>NUCLEOTIDE SEQUENCE [LARGE SCALE GENOMIC DNA]</scope>
    <source>
        <strain>ATCC BAA-491 / LMD-9</strain>
    </source>
</reference>
<proteinExistence type="inferred from homology"/>
<protein>
    <recommendedName>
        <fullName evidence="1">UDP-N-acetylglucosamine--N-acetylmuramyl-(pentapeptide) pyrophosphoryl-undecaprenol N-acetylglucosamine transferase</fullName>
        <ecNumber evidence="1">2.4.1.227</ecNumber>
    </recommendedName>
    <alternativeName>
        <fullName evidence="1">Undecaprenyl-PP-MurNAc-pentapeptide-UDPGlcNAc GlcNAc transferase</fullName>
    </alternativeName>
</protein>
<gene>
    <name evidence="1" type="primary">murG</name>
    <name type="ordered locus">STER_0774</name>
</gene>
<accession>Q03L97</accession>
<feature type="chain" id="PRO_0000315185" description="UDP-N-acetylglucosamine--N-acetylmuramyl-(pentapeptide) pyrophosphoryl-undecaprenol N-acetylglucosamine transferase">
    <location>
        <begin position="1"/>
        <end position="356"/>
    </location>
</feature>
<feature type="binding site" evidence="1">
    <location>
        <position position="198"/>
    </location>
    <ligand>
        <name>UDP-N-acetyl-alpha-D-glucosamine</name>
        <dbReference type="ChEBI" id="CHEBI:57705"/>
    </ligand>
</feature>
<feature type="binding site" evidence="1">
    <location>
        <position position="289"/>
    </location>
    <ligand>
        <name>UDP-N-acetyl-alpha-D-glucosamine</name>
        <dbReference type="ChEBI" id="CHEBI:57705"/>
    </ligand>
</feature>
<sequence>MAKSKKIVFTGGGTVGHVTLNLILIPKFLKDGWEVHYIGDKHGIEHEQIDKSGLDVTFHSIATGKLRRYFSWQNMLDVFKVGWGILQSIAIIAKIRPQALFSKGGFVSVPPVIASKLLRVPVYVHESDLSMGLANKIAYKFATTMFTTFEQSKTLVKTRHVGAITKVGMTRFDNSDQLDKIKEQFDEKLKTVLFIGGSTGAKVFNDFISKTPELIENYNIINISGDSSLNTLERHLYRVDYVTDLYQPLMDMADLVVTRGGSNTIFELLAMKKLHLIVPLGKEASRGDQLENADYFERKGYARQLQEPELSWETLKHELEQLVEHAETYKEAMAKSEEITSPDDFYNLLVTSISNK</sequence>
<evidence type="ECO:0000255" key="1">
    <source>
        <dbReference type="HAMAP-Rule" id="MF_00033"/>
    </source>
</evidence>
<name>MURG_STRTD</name>
<organism>
    <name type="scientific">Streptococcus thermophilus (strain ATCC BAA-491 / LMD-9)</name>
    <dbReference type="NCBI Taxonomy" id="322159"/>
    <lineage>
        <taxon>Bacteria</taxon>
        <taxon>Bacillati</taxon>
        <taxon>Bacillota</taxon>
        <taxon>Bacilli</taxon>
        <taxon>Lactobacillales</taxon>
        <taxon>Streptococcaceae</taxon>
        <taxon>Streptococcus</taxon>
    </lineage>
</organism>
<comment type="function">
    <text evidence="1">Cell wall formation. Catalyzes the transfer of a GlcNAc subunit on undecaprenyl-pyrophosphoryl-MurNAc-pentapeptide (lipid intermediate I) to form undecaprenyl-pyrophosphoryl-MurNAc-(pentapeptide)GlcNAc (lipid intermediate II).</text>
</comment>
<comment type="catalytic activity">
    <reaction evidence="1">
        <text>Mur2Ac(oyl-L-Ala-gamma-D-Glu-L-Lys-D-Ala-D-Ala)-di-trans,octa-cis-undecaprenyl diphosphate + UDP-N-acetyl-alpha-D-glucosamine = beta-D-GlcNAc-(1-&gt;4)-Mur2Ac(oyl-L-Ala-gamma-D-Glu-L-Lys-D-Ala-D-Ala)-di-trans,octa-cis-undecaprenyl diphosphate + UDP + H(+)</text>
        <dbReference type="Rhea" id="RHEA:23192"/>
        <dbReference type="ChEBI" id="CHEBI:15378"/>
        <dbReference type="ChEBI" id="CHEBI:57705"/>
        <dbReference type="ChEBI" id="CHEBI:58223"/>
        <dbReference type="ChEBI" id="CHEBI:60032"/>
        <dbReference type="ChEBI" id="CHEBI:60033"/>
        <dbReference type="EC" id="2.4.1.227"/>
    </reaction>
</comment>
<comment type="pathway">
    <text evidence="1">Cell wall biogenesis; peptidoglycan biosynthesis.</text>
</comment>
<comment type="subcellular location">
    <subcellularLocation>
        <location evidence="1">Cell membrane</location>
        <topology evidence="1">Peripheral membrane protein</topology>
        <orientation evidence="1">Cytoplasmic side</orientation>
    </subcellularLocation>
</comment>
<comment type="similarity">
    <text evidence="1">Belongs to the glycosyltransferase 28 family. MurG subfamily.</text>
</comment>